<sequence>MDIWKPEIKYLRYTNGFNVSELEDACFKFNYKFPKVGYCRVPSHAWCRNQGSFCATLTLYGKSKHYDKYFGVITGFTAFANTVEEAVNKLVFLAVDFITWRRQELNVYG</sequence>
<name>NS12_CVBEN</name>
<accession>P0C2P7</accession>
<accession>Q9QAR2</accession>
<organism>
    <name type="scientific">Bovine coronavirus (strain 98TXSF-110-ENT)</name>
    <name type="common">BCoV-ENT</name>
    <name type="synonym">BCV</name>
    <dbReference type="NCBI Taxonomy" id="233262"/>
    <lineage>
        <taxon>Viruses</taxon>
        <taxon>Riboviria</taxon>
        <taxon>Orthornavirae</taxon>
        <taxon>Pisuviricota</taxon>
        <taxon>Pisoniviricetes</taxon>
        <taxon>Nidovirales</taxon>
        <taxon>Cornidovirineae</taxon>
        <taxon>Coronaviridae</taxon>
        <taxon>Orthocoronavirinae</taxon>
        <taxon>Betacoronavirus</taxon>
        <taxon>Embecovirus</taxon>
        <taxon>Betacoronavirus 1</taxon>
    </lineage>
</organism>
<protein>
    <recommendedName>
        <fullName>Non-structural protein of 12.7 kDa</fullName>
        <shortName>ns12.7</shortName>
    </recommendedName>
    <alternativeName>
        <fullName>12.7 kDa accessory protein</fullName>
    </alternativeName>
</protein>
<feature type="chain" id="PRO_0000283948" description="Non-structural protein of 12.7 kDa">
    <location>
        <begin position="1"/>
        <end position="109"/>
    </location>
</feature>
<gene>
    <name type="ORF">5a</name>
</gene>
<comment type="similarity">
    <text evidence="1">Belongs to the coronaviruses ns12.7 protein family.</text>
</comment>
<dbReference type="EMBL" id="AF391541">
    <property type="protein sequence ID" value="AAK83359.1"/>
    <property type="molecule type" value="Genomic_RNA"/>
</dbReference>
<dbReference type="RefSeq" id="NP_150080.1">
    <property type="nucleotide sequence ID" value="NC_003045.1"/>
</dbReference>
<dbReference type="KEGG" id="vg:1724647"/>
<dbReference type="Proteomes" id="UP000008570">
    <property type="component" value="Segment"/>
</dbReference>
<dbReference type="InterPro" id="IPR006841">
    <property type="entry name" value="Corona_NS2"/>
</dbReference>
<dbReference type="Pfam" id="PF04753">
    <property type="entry name" value="Corona_NS12-7"/>
    <property type="match status" value="1"/>
</dbReference>
<reference key="1">
    <citation type="journal article" date="2001" name="J. Gen. Virol.">
        <title>Comparison of genomic and predicted amino acid sequences of respiratory and enteric bovine coronaviruses isolated from the same animal with fatal shipping pneumonia.</title>
        <authorList>
            <person name="Chouljenko V.N."/>
            <person name="Lin X.Q."/>
            <person name="Storz J."/>
            <person name="Kousoulas K.G."/>
            <person name="Gorbalenya A.E."/>
        </authorList>
    </citation>
    <scope>NUCLEOTIDE SEQUENCE [GENOMIC RNA]</scope>
</reference>
<organismHost>
    <name type="scientific">Bos taurus</name>
    <name type="common">Bovine</name>
    <dbReference type="NCBI Taxonomy" id="9913"/>
</organismHost>
<evidence type="ECO:0000305" key="1"/>
<proteinExistence type="inferred from homology"/>